<sequence>MKARRQRKIIEIIHRQVIATQAELAQVLRKAGFAVTQATVSRDVKELGLLKASDGQTVRYLPPGEQPVAAAEERMVRLFRDYVWEVNANESLVIVKTLPGAAQGVASALDYARWPEILGTVAGDDTIFVAVKSQRDVGGIRERLAGLLEG</sequence>
<protein>
    <recommendedName>
        <fullName evidence="1">Arginine repressor</fullName>
    </recommendedName>
</protein>
<comment type="function">
    <text evidence="1">Regulates arginine biosynthesis genes.</text>
</comment>
<comment type="pathway">
    <text>Amino-acid biosynthesis; L-arginine biosynthesis [regulation].</text>
</comment>
<comment type="subcellular location">
    <subcellularLocation>
        <location evidence="1">Cytoplasm</location>
    </subcellularLocation>
</comment>
<comment type="similarity">
    <text evidence="1">Belongs to the ArgR family.</text>
</comment>
<gene>
    <name evidence="1" type="primary">argR</name>
    <name type="ordered locus">Daud_1030</name>
</gene>
<feature type="chain" id="PRO_1000097867" description="Arginine repressor">
    <location>
        <begin position="1"/>
        <end position="150"/>
    </location>
</feature>
<organism>
    <name type="scientific">Desulforudis audaxviator (strain MP104C)</name>
    <dbReference type="NCBI Taxonomy" id="477974"/>
    <lineage>
        <taxon>Bacteria</taxon>
        <taxon>Bacillati</taxon>
        <taxon>Bacillota</taxon>
        <taxon>Clostridia</taxon>
        <taxon>Thermoanaerobacterales</taxon>
        <taxon>Candidatus Desulforudaceae</taxon>
        <taxon>Candidatus Desulforudis</taxon>
    </lineage>
</organism>
<evidence type="ECO:0000255" key="1">
    <source>
        <dbReference type="HAMAP-Rule" id="MF_00173"/>
    </source>
</evidence>
<dbReference type="EMBL" id="CP000860">
    <property type="protein sequence ID" value="ACA59542.1"/>
    <property type="molecule type" value="Genomic_DNA"/>
</dbReference>
<dbReference type="RefSeq" id="WP_012302128.1">
    <property type="nucleotide sequence ID" value="NC_010424.1"/>
</dbReference>
<dbReference type="SMR" id="B1I3J9"/>
<dbReference type="STRING" id="477974.Daud_1030"/>
<dbReference type="KEGG" id="dau:Daud_1030"/>
<dbReference type="eggNOG" id="COG1438">
    <property type="taxonomic scope" value="Bacteria"/>
</dbReference>
<dbReference type="HOGENOM" id="CLU_097103_3_0_9"/>
<dbReference type="OrthoDB" id="9807089at2"/>
<dbReference type="UniPathway" id="UPA00068"/>
<dbReference type="Proteomes" id="UP000008544">
    <property type="component" value="Chromosome"/>
</dbReference>
<dbReference type="GO" id="GO:0005737">
    <property type="term" value="C:cytoplasm"/>
    <property type="evidence" value="ECO:0007669"/>
    <property type="project" value="UniProtKB-SubCell"/>
</dbReference>
<dbReference type="GO" id="GO:0034618">
    <property type="term" value="F:arginine binding"/>
    <property type="evidence" value="ECO:0007669"/>
    <property type="project" value="InterPro"/>
</dbReference>
<dbReference type="GO" id="GO:0003677">
    <property type="term" value="F:DNA binding"/>
    <property type="evidence" value="ECO:0007669"/>
    <property type="project" value="UniProtKB-KW"/>
</dbReference>
<dbReference type="GO" id="GO:0003700">
    <property type="term" value="F:DNA-binding transcription factor activity"/>
    <property type="evidence" value="ECO:0007669"/>
    <property type="project" value="UniProtKB-UniRule"/>
</dbReference>
<dbReference type="GO" id="GO:0006526">
    <property type="term" value="P:L-arginine biosynthetic process"/>
    <property type="evidence" value="ECO:0007669"/>
    <property type="project" value="UniProtKB-UniPathway"/>
</dbReference>
<dbReference type="GO" id="GO:0051259">
    <property type="term" value="P:protein complex oligomerization"/>
    <property type="evidence" value="ECO:0007669"/>
    <property type="project" value="InterPro"/>
</dbReference>
<dbReference type="GO" id="GO:1900079">
    <property type="term" value="P:regulation of arginine biosynthetic process"/>
    <property type="evidence" value="ECO:0007669"/>
    <property type="project" value="UniProtKB-UniRule"/>
</dbReference>
<dbReference type="Gene3D" id="3.30.1360.40">
    <property type="match status" value="1"/>
</dbReference>
<dbReference type="Gene3D" id="1.10.10.10">
    <property type="entry name" value="Winged helix-like DNA-binding domain superfamily/Winged helix DNA-binding domain"/>
    <property type="match status" value="1"/>
</dbReference>
<dbReference type="HAMAP" id="MF_00173">
    <property type="entry name" value="Arg_repressor"/>
    <property type="match status" value="1"/>
</dbReference>
<dbReference type="InterPro" id="IPR001669">
    <property type="entry name" value="Arg_repress"/>
</dbReference>
<dbReference type="InterPro" id="IPR020899">
    <property type="entry name" value="Arg_repress_C"/>
</dbReference>
<dbReference type="InterPro" id="IPR036251">
    <property type="entry name" value="Arg_repress_C_sf"/>
</dbReference>
<dbReference type="InterPro" id="IPR020900">
    <property type="entry name" value="Arg_repress_DNA-bd"/>
</dbReference>
<dbReference type="InterPro" id="IPR036388">
    <property type="entry name" value="WH-like_DNA-bd_sf"/>
</dbReference>
<dbReference type="InterPro" id="IPR036390">
    <property type="entry name" value="WH_DNA-bd_sf"/>
</dbReference>
<dbReference type="NCBIfam" id="TIGR01529">
    <property type="entry name" value="argR_whole"/>
    <property type="match status" value="1"/>
</dbReference>
<dbReference type="PANTHER" id="PTHR34471">
    <property type="entry name" value="ARGININE REPRESSOR"/>
    <property type="match status" value="1"/>
</dbReference>
<dbReference type="PANTHER" id="PTHR34471:SF1">
    <property type="entry name" value="ARGININE REPRESSOR"/>
    <property type="match status" value="1"/>
</dbReference>
<dbReference type="Pfam" id="PF01316">
    <property type="entry name" value="Arg_repressor"/>
    <property type="match status" value="1"/>
</dbReference>
<dbReference type="Pfam" id="PF02863">
    <property type="entry name" value="Arg_repressor_C"/>
    <property type="match status" value="1"/>
</dbReference>
<dbReference type="PRINTS" id="PR01467">
    <property type="entry name" value="ARGREPRESSOR"/>
</dbReference>
<dbReference type="SUPFAM" id="SSF55252">
    <property type="entry name" value="C-terminal domain of arginine repressor"/>
    <property type="match status" value="1"/>
</dbReference>
<dbReference type="SUPFAM" id="SSF46785">
    <property type="entry name" value="Winged helix' DNA-binding domain"/>
    <property type="match status" value="1"/>
</dbReference>
<proteinExistence type="inferred from homology"/>
<keyword id="KW-0028">Amino-acid biosynthesis</keyword>
<keyword id="KW-0055">Arginine biosynthesis</keyword>
<keyword id="KW-0963">Cytoplasm</keyword>
<keyword id="KW-0238">DNA-binding</keyword>
<keyword id="KW-1185">Reference proteome</keyword>
<keyword id="KW-0678">Repressor</keyword>
<keyword id="KW-0804">Transcription</keyword>
<keyword id="KW-0805">Transcription regulation</keyword>
<accession>B1I3J9</accession>
<name>ARGR_DESAP</name>
<reference key="1">
    <citation type="submission" date="2007-10" db="EMBL/GenBank/DDBJ databases">
        <title>Complete sequence of chromosome of Desulforudis audaxviator MP104C.</title>
        <authorList>
            <person name="Copeland A."/>
            <person name="Lucas S."/>
            <person name="Lapidus A."/>
            <person name="Barry K."/>
            <person name="Glavina del Rio T."/>
            <person name="Dalin E."/>
            <person name="Tice H."/>
            <person name="Bruce D."/>
            <person name="Pitluck S."/>
            <person name="Lowry S.R."/>
            <person name="Larimer F."/>
            <person name="Land M.L."/>
            <person name="Hauser L."/>
            <person name="Kyrpides N."/>
            <person name="Ivanova N.N."/>
            <person name="Richardson P."/>
        </authorList>
    </citation>
    <scope>NUCLEOTIDE SEQUENCE [LARGE SCALE GENOMIC DNA]</scope>
    <source>
        <strain>MP104C</strain>
    </source>
</reference>